<gene>
    <name evidence="1" type="primary">leuS</name>
    <name type="ordered locus">BH3281</name>
</gene>
<evidence type="ECO:0000255" key="1">
    <source>
        <dbReference type="HAMAP-Rule" id="MF_00049"/>
    </source>
</evidence>
<comment type="catalytic activity">
    <reaction evidence="1">
        <text>tRNA(Leu) + L-leucine + ATP = L-leucyl-tRNA(Leu) + AMP + diphosphate</text>
        <dbReference type="Rhea" id="RHEA:11688"/>
        <dbReference type="Rhea" id="RHEA-COMP:9613"/>
        <dbReference type="Rhea" id="RHEA-COMP:9622"/>
        <dbReference type="ChEBI" id="CHEBI:30616"/>
        <dbReference type="ChEBI" id="CHEBI:33019"/>
        <dbReference type="ChEBI" id="CHEBI:57427"/>
        <dbReference type="ChEBI" id="CHEBI:78442"/>
        <dbReference type="ChEBI" id="CHEBI:78494"/>
        <dbReference type="ChEBI" id="CHEBI:456215"/>
        <dbReference type="EC" id="6.1.1.4"/>
    </reaction>
</comment>
<comment type="subcellular location">
    <subcellularLocation>
        <location evidence="1">Cytoplasm</location>
    </subcellularLocation>
</comment>
<comment type="similarity">
    <text evidence="1">Belongs to the class-I aminoacyl-tRNA synthetase family.</text>
</comment>
<proteinExistence type="inferred from homology"/>
<reference key="1">
    <citation type="journal article" date="2000" name="Nucleic Acids Res.">
        <title>Complete genome sequence of the alkaliphilic bacterium Bacillus halodurans and genomic sequence comparison with Bacillus subtilis.</title>
        <authorList>
            <person name="Takami H."/>
            <person name="Nakasone K."/>
            <person name="Takaki Y."/>
            <person name="Maeno G."/>
            <person name="Sasaki R."/>
            <person name="Masui N."/>
            <person name="Fuji F."/>
            <person name="Hirama C."/>
            <person name="Nakamura Y."/>
            <person name="Ogasawara N."/>
            <person name="Kuhara S."/>
            <person name="Horikoshi K."/>
        </authorList>
    </citation>
    <scope>NUCLEOTIDE SEQUENCE [LARGE SCALE GENOMIC DNA]</scope>
    <source>
        <strain>ATCC BAA-125 / DSM 18197 / FERM 7344 / JCM 9153 / C-125</strain>
    </source>
</reference>
<sequence>MSFSHREIESKWQKYWEENKTFKTEEDETREKFYALDMFPYPSGAGLHVGHPEGYTATDILSRMKRMQGYNVLHPMGWDAFGLPAEQYAIDTGNSPAEFTEKNINTFRRQIKSLGFSYDWDREVNTTDPDYYKWTQWIFIQLYNKGLAYIDEVAVNWCPALGTVLANEEVIDGKSERGGHPVERRPMKQWMLKITEYADRLLEDLEELDWPESIKDMQRNWIGRSEGAEVTFSVDGHDDTITVFTTRPDTLFGATYMVLAPEHKLVDAITTSEQKQAVESYKKEVATKSDLERTELAKEKTGVFTGAYAINPVNGEKVPIWIADYVLVSYGTGAIMAVPAHDERDYEFAKTFDLPIKEVVSGGVIEQEAYTGDGPHVNSEFLNGLSKEEAIEKMIQWLEAEKKGTKKVTYRLRDWLFSRQRYWGEPIPVIHWEDGTMSTVPEDELPLELPKMSEIKPSGTGESPLANATDWLEVVDPVTGKKGRRETNTMPQWAGSCWYYLRYIDPDNERMIADPEKLKKWLPVDIYIGGAEHAVLHLLYARFWHKVLYDLGVVPTKEPFQKLYNQGMILGENNEKMSKSKGNVVNPDDIIDSHGADTLRLYEMFMGPLDASIAWSTTGLDGARRFLDRVWRLLVDENTEEKSSKIVNGEGSPELKRAYHQTVKKVTEDFEELRFNVGISQLMVYVNEAYKQEELPLDQAEGFVKLLSPVAPHLAEELWSKLGHEGTIAYEPWPTYDEAFLVEDEVEIVVQHNGKVRAKVVVAKDATKEQMEEAALANERVKESIDGKTVRKVIVVPGKLVNIVAN</sequence>
<accession>Q9K7S8</accession>
<feature type="chain" id="PRO_0000151969" description="Leucine--tRNA ligase">
    <location>
        <begin position="1"/>
        <end position="806"/>
    </location>
</feature>
<feature type="short sequence motif" description="'HIGH' region">
    <location>
        <begin position="40"/>
        <end position="51"/>
    </location>
</feature>
<feature type="short sequence motif" description="'KMSKS' region">
    <location>
        <begin position="576"/>
        <end position="580"/>
    </location>
</feature>
<feature type="binding site" evidence="1">
    <location>
        <position position="579"/>
    </location>
    <ligand>
        <name>ATP</name>
        <dbReference type="ChEBI" id="CHEBI:30616"/>
    </ligand>
</feature>
<organism>
    <name type="scientific">Halalkalibacterium halodurans (strain ATCC BAA-125 / DSM 18197 / FERM 7344 / JCM 9153 / C-125)</name>
    <name type="common">Bacillus halodurans</name>
    <dbReference type="NCBI Taxonomy" id="272558"/>
    <lineage>
        <taxon>Bacteria</taxon>
        <taxon>Bacillati</taxon>
        <taxon>Bacillota</taxon>
        <taxon>Bacilli</taxon>
        <taxon>Bacillales</taxon>
        <taxon>Bacillaceae</taxon>
        <taxon>Halalkalibacterium (ex Joshi et al. 2022)</taxon>
    </lineage>
</organism>
<dbReference type="EC" id="6.1.1.4" evidence="1"/>
<dbReference type="EMBL" id="BA000004">
    <property type="protein sequence ID" value="BAB07000.1"/>
    <property type="molecule type" value="Genomic_DNA"/>
</dbReference>
<dbReference type="PIR" id="A84060">
    <property type="entry name" value="A84060"/>
</dbReference>
<dbReference type="RefSeq" id="WP_010899422.1">
    <property type="nucleotide sequence ID" value="NC_002570.2"/>
</dbReference>
<dbReference type="SMR" id="Q9K7S8"/>
<dbReference type="STRING" id="272558.gene:10729193"/>
<dbReference type="KEGG" id="bha:BH3281"/>
<dbReference type="eggNOG" id="COG0495">
    <property type="taxonomic scope" value="Bacteria"/>
</dbReference>
<dbReference type="HOGENOM" id="CLU_004427_0_0_9"/>
<dbReference type="OrthoDB" id="9810365at2"/>
<dbReference type="Proteomes" id="UP000001258">
    <property type="component" value="Chromosome"/>
</dbReference>
<dbReference type="GO" id="GO:0005829">
    <property type="term" value="C:cytosol"/>
    <property type="evidence" value="ECO:0007669"/>
    <property type="project" value="TreeGrafter"/>
</dbReference>
<dbReference type="GO" id="GO:0002161">
    <property type="term" value="F:aminoacyl-tRNA deacylase activity"/>
    <property type="evidence" value="ECO:0007669"/>
    <property type="project" value="InterPro"/>
</dbReference>
<dbReference type="GO" id="GO:0005524">
    <property type="term" value="F:ATP binding"/>
    <property type="evidence" value="ECO:0007669"/>
    <property type="project" value="UniProtKB-UniRule"/>
</dbReference>
<dbReference type="GO" id="GO:0004823">
    <property type="term" value="F:leucine-tRNA ligase activity"/>
    <property type="evidence" value="ECO:0007669"/>
    <property type="project" value="UniProtKB-UniRule"/>
</dbReference>
<dbReference type="GO" id="GO:0006429">
    <property type="term" value="P:leucyl-tRNA aminoacylation"/>
    <property type="evidence" value="ECO:0007669"/>
    <property type="project" value="UniProtKB-UniRule"/>
</dbReference>
<dbReference type="CDD" id="cd07958">
    <property type="entry name" value="Anticodon_Ia_Leu_BEm"/>
    <property type="match status" value="1"/>
</dbReference>
<dbReference type="CDD" id="cd00812">
    <property type="entry name" value="LeuRS_core"/>
    <property type="match status" value="1"/>
</dbReference>
<dbReference type="FunFam" id="3.10.20.590:FF:000001">
    <property type="entry name" value="Leucine--tRNA ligase"/>
    <property type="match status" value="1"/>
</dbReference>
<dbReference type="FunFam" id="3.40.50.620:FF:000056">
    <property type="entry name" value="Leucine--tRNA ligase"/>
    <property type="match status" value="1"/>
</dbReference>
<dbReference type="FunFam" id="3.40.50.620:FF:000077">
    <property type="entry name" value="Leucine--tRNA ligase"/>
    <property type="match status" value="1"/>
</dbReference>
<dbReference type="FunFam" id="3.90.740.10:FF:000017">
    <property type="entry name" value="Leucine--tRNA ligase"/>
    <property type="match status" value="1"/>
</dbReference>
<dbReference type="FunFam" id="1.10.730.10:FF:000011">
    <property type="entry name" value="Leucine--tRNA ligase chloroplastic/mitochondrial"/>
    <property type="match status" value="1"/>
</dbReference>
<dbReference type="Gene3D" id="3.10.20.590">
    <property type="match status" value="1"/>
</dbReference>
<dbReference type="Gene3D" id="3.40.50.620">
    <property type="entry name" value="HUPs"/>
    <property type="match status" value="2"/>
</dbReference>
<dbReference type="Gene3D" id="1.10.730.10">
    <property type="entry name" value="Isoleucyl-tRNA Synthetase, Domain 1"/>
    <property type="match status" value="1"/>
</dbReference>
<dbReference type="HAMAP" id="MF_00049_B">
    <property type="entry name" value="Leu_tRNA_synth_B"/>
    <property type="match status" value="1"/>
</dbReference>
<dbReference type="InterPro" id="IPR001412">
    <property type="entry name" value="aa-tRNA-synth_I_CS"/>
</dbReference>
<dbReference type="InterPro" id="IPR002302">
    <property type="entry name" value="Leu-tRNA-ligase"/>
</dbReference>
<dbReference type="InterPro" id="IPR025709">
    <property type="entry name" value="Leu_tRNA-synth_edit"/>
</dbReference>
<dbReference type="InterPro" id="IPR013155">
    <property type="entry name" value="M/V/L/I-tRNA-synth_anticd-bd"/>
</dbReference>
<dbReference type="InterPro" id="IPR015413">
    <property type="entry name" value="Methionyl/Leucyl_tRNA_Synth"/>
</dbReference>
<dbReference type="InterPro" id="IPR014729">
    <property type="entry name" value="Rossmann-like_a/b/a_fold"/>
</dbReference>
<dbReference type="InterPro" id="IPR009080">
    <property type="entry name" value="tRNAsynth_Ia_anticodon-bd"/>
</dbReference>
<dbReference type="InterPro" id="IPR009008">
    <property type="entry name" value="Val/Leu/Ile-tRNA-synth_edit"/>
</dbReference>
<dbReference type="NCBIfam" id="TIGR00396">
    <property type="entry name" value="leuS_bact"/>
    <property type="match status" value="1"/>
</dbReference>
<dbReference type="PANTHER" id="PTHR43740:SF2">
    <property type="entry name" value="LEUCINE--TRNA LIGASE, MITOCHONDRIAL"/>
    <property type="match status" value="1"/>
</dbReference>
<dbReference type="PANTHER" id="PTHR43740">
    <property type="entry name" value="LEUCYL-TRNA SYNTHETASE"/>
    <property type="match status" value="1"/>
</dbReference>
<dbReference type="Pfam" id="PF08264">
    <property type="entry name" value="Anticodon_1"/>
    <property type="match status" value="1"/>
</dbReference>
<dbReference type="Pfam" id="PF13603">
    <property type="entry name" value="tRNA-synt_1_2"/>
    <property type="match status" value="1"/>
</dbReference>
<dbReference type="Pfam" id="PF09334">
    <property type="entry name" value="tRNA-synt_1g"/>
    <property type="match status" value="2"/>
</dbReference>
<dbReference type="PRINTS" id="PR00985">
    <property type="entry name" value="TRNASYNTHLEU"/>
</dbReference>
<dbReference type="SUPFAM" id="SSF47323">
    <property type="entry name" value="Anticodon-binding domain of a subclass of class I aminoacyl-tRNA synthetases"/>
    <property type="match status" value="1"/>
</dbReference>
<dbReference type="SUPFAM" id="SSF52374">
    <property type="entry name" value="Nucleotidylyl transferase"/>
    <property type="match status" value="1"/>
</dbReference>
<dbReference type="SUPFAM" id="SSF50677">
    <property type="entry name" value="ValRS/IleRS/LeuRS editing domain"/>
    <property type="match status" value="1"/>
</dbReference>
<dbReference type="PROSITE" id="PS00178">
    <property type="entry name" value="AA_TRNA_LIGASE_I"/>
    <property type="match status" value="1"/>
</dbReference>
<protein>
    <recommendedName>
        <fullName evidence="1">Leucine--tRNA ligase</fullName>
        <ecNumber evidence="1">6.1.1.4</ecNumber>
    </recommendedName>
    <alternativeName>
        <fullName evidence="1">Leucyl-tRNA synthetase</fullName>
        <shortName evidence="1">LeuRS</shortName>
    </alternativeName>
</protein>
<name>SYL_HALH5</name>
<keyword id="KW-0030">Aminoacyl-tRNA synthetase</keyword>
<keyword id="KW-0067">ATP-binding</keyword>
<keyword id="KW-0963">Cytoplasm</keyword>
<keyword id="KW-0436">Ligase</keyword>
<keyword id="KW-0547">Nucleotide-binding</keyword>
<keyword id="KW-0648">Protein biosynthesis</keyword>
<keyword id="KW-1185">Reference proteome</keyword>